<feature type="chain" id="PRO_1000120051" description="ATP-dependent 6-phosphofructokinase">
    <location>
        <begin position="1"/>
        <end position="320"/>
    </location>
</feature>
<feature type="active site" description="Proton acceptor" evidence="1">
    <location>
        <position position="128"/>
    </location>
</feature>
<feature type="binding site" evidence="1">
    <location>
        <position position="12"/>
    </location>
    <ligand>
        <name>ATP</name>
        <dbReference type="ChEBI" id="CHEBI:30616"/>
    </ligand>
</feature>
<feature type="binding site" evidence="1">
    <location>
        <begin position="22"/>
        <end position="26"/>
    </location>
    <ligand>
        <name>ADP</name>
        <dbReference type="ChEBI" id="CHEBI:456216"/>
        <note>allosteric activator; ligand shared between dimeric partners</note>
    </ligand>
</feature>
<feature type="binding site" evidence="1">
    <location>
        <begin position="55"/>
        <end position="60"/>
    </location>
    <ligand>
        <name>ADP</name>
        <dbReference type="ChEBI" id="CHEBI:456216"/>
        <note>allosteric activator; ligand shared between dimeric partners</note>
    </ligand>
</feature>
<feature type="binding site" evidence="1">
    <location>
        <begin position="73"/>
        <end position="74"/>
    </location>
    <ligand>
        <name>ATP</name>
        <dbReference type="ChEBI" id="CHEBI:30616"/>
    </ligand>
</feature>
<feature type="binding site" evidence="1">
    <location>
        <begin position="103"/>
        <end position="106"/>
    </location>
    <ligand>
        <name>ATP</name>
        <dbReference type="ChEBI" id="CHEBI:30616"/>
    </ligand>
</feature>
<feature type="binding site" evidence="1">
    <location>
        <position position="104"/>
    </location>
    <ligand>
        <name>Mg(2+)</name>
        <dbReference type="ChEBI" id="CHEBI:18420"/>
        <note>catalytic</note>
    </ligand>
</feature>
<feature type="binding site" description="in other chain" evidence="1">
    <location>
        <begin position="126"/>
        <end position="128"/>
    </location>
    <ligand>
        <name>substrate</name>
        <note>ligand shared between dimeric partners</note>
    </ligand>
</feature>
<feature type="binding site" description="in other chain" evidence="1">
    <location>
        <position position="155"/>
    </location>
    <ligand>
        <name>ADP</name>
        <dbReference type="ChEBI" id="CHEBI:456216"/>
        <note>allosteric activator; ligand shared between dimeric partners</note>
    </ligand>
</feature>
<feature type="binding site" evidence="1">
    <location>
        <position position="163"/>
    </location>
    <ligand>
        <name>substrate</name>
        <note>ligand shared between dimeric partners</note>
    </ligand>
</feature>
<feature type="binding site" description="in other chain" evidence="1">
    <location>
        <begin position="170"/>
        <end position="172"/>
    </location>
    <ligand>
        <name>substrate</name>
        <note>ligand shared between dimeric partners</note>
    </ligand>
</feature>
<feature type="binding site" description="in other chain" evidence="1">
    <location>
        <begin position="186"/>
        <end position="188"/>
    </location>
    <ligand>
        <name>ADP</name>
        <dbReference type="ChEBI" id="CHEBI:456216"/>
        <note>allosteric activator; ligand shared between dimeric partners</note>
    </ligand>
</feature>
<feature type="binding site" description="in other chain" evidence="1">
    <location>
        <position position="212"/>
    </location>
    <ligand>
        <name>ADP</name>
        <dbReference type="ChEBI" id="CHEBI:456216"/>
        <note>allosteric activator; ligand shared between dimeric partners</note>
    </ligand>
</feature>
<feature type="binding site" description="in other chain" evidence="1">
    <location>
        <begin position="214"/>
        <end position="216"/>
    </location>
    <ligand>
        <name>ADP</name>
        <dbReference type="ChEBI" id="CHEBI:456216"/>
        <note>allosteric activator; ligand shared between dimeric partners</note>
    </ligand>
</feature>
<feature type="binding site" description="in other chain" evidence="1">
    <location>
        <position position="223"/>
    </location>
    <ligand>
        <name>substrate</name>
        <note>ligand shared between dimeric partners</note>
    </ligand>
</feature>
<feature type="binding site" evidence="1">
    <location>
        <position position="244"/>
    </location>
    <ligand>
        <name>substrate</name>
        <note>ligand shared between dimeric partners</note>
    </ligand>
</feature>
<feature type="binding site" description="in other chain" evidence="1">
    <location>
        <begin position="250"/>
        <end position="253"/>
    </location>
    <ligand>
        <name>substrate</name>
        <note>ligand shared between dimeric partners</note>
    </ligand>
</feature>
<sequence>MIKKIGVLTSGGDAPGMNAAIRGVVRAALTEGLEVMGIYDGYLGLYEDRMVQLDRYSVSDMINRGGTFLGSARFPEFRDENIRAVAIENLKKRGIDALVVIGGDGSYMGAKRLTEMGFPCIGLPGTIDNDIKGTDYTIGYFTALGTVVEAIDRLRDTSSSHQRISIVEVMGRYCGDLTLAAAIAGGCEFIVVPEVEFNREDLVAEIKAGIAKGKKHAIVAITEHMCDVDELAHFIEKETGRETRATVLGHIQRGGSPVPYDRILASRMGAYAIDLLLEGHGGRCVGIQNEQLVHHDIIDAIENMKRPFKSDWMECAKKLY</sequence>
<keyword id="KW-0021">Allosteric enzyme</keyword>
<keyword id="KW-0067">ATP-binding</keyword>
<keyword id="KW-0963">Cytoplasm</keyword>
<keyword id="KW-0324">Glycolysis</keyword>
<keyword id="KW-0418">Kinase</keyword>
<keyword id="KW-0460">Magnesium</keyword>
<keyword id="KW-0479">Metal-binding</keyword>
<keyword id="KW-0547">Nucleotide-binding</keyword>
<keyword id="KW-0808">Transferase</keyword>
<comment type="function">
    <text evidence="1">Catalyzes the phosphorylation of D-fructose 6-phosphate to fructose 1,6-bisphosphate by ATP, the first committing step of glycolysis.</text>
</comment>
<comment type="catalytic activity">
    <reaction evidence="1">
        <text>beta-D-fructose 6-phosphate + ATP = beta-D-fructose 1,6-bisphosphate + ADP + H(+)</text>
        <dbReference type="Rhea" id="RHEA:16109"/>
        <dbReference type="ChEBI" id="CHEBI:15378"/>
        <dbReference type="ChEBI" id="CHEBI:30616"/>
        <dbReference type="ChEBI" id="CHEBI:32966"/>
        <dbReference type="ChEBI" id="CHEBI:57634"/>
        <dbReference type="ChEBI" id="CHEBI:456216"/>
        <dbReference type="EC" id="2.7.1.11"/>
    </reaction>
</comment>
<comment type="cofactor">
    <cofactor evidence="1">
        <name>Mg(2+)</name>
        <dbReference type="ChEBI" id="CHEBI:18420"/>
    </cofactor>
</comment>
<comment type="activity regulation">
    <text evidence="1">Allosterically activated by ADP and other diphosphonucleosides, and allosterically inhibited by phosphoenolpyruvate.</text>
</comment>
<comment type="pathway">
    <text evidence="1">Carbohydrate degradation; glycolysis; D-glyceraldehyde 3-phosphate and glycerone phosphate from D-glucose: step 3/4.</text>
</comment>
<comment type="subunit">
    <text evidence="1">Homotetramer.</text>
</comment>
<comment type="subcellular location">
    <subcellularLocation>
        <location evidence="1">Cytoplasm</location>
    </subcellularLocation>
</comment>
<comment type="similarity">
    <text evidence="1">Belongs to the phosphofructokinase type A (PFKA) family. ATP-dependent PFK group I subfamily. Prokaryotic clade 'B1' sub-subfamily.</text>
</comment>
<proteinExistence type="inferred from homology"/>
<name>PFKA_SALDC</name>
<dbReference type="EC" id="2.7.1.11" evidence="1"/>
<dbReference type="EMBL" id="CP001144">
    <property type="protein sequence ID" value="ACH75902.1"/>
    <property type="molecule type" value="Genomic_DNA"/>
</dbReference>
<dbReference type="RefSeq" id="WP_000591793.1">
    <property type="nucleotide sequence ID" value="NC_011205.1"/>
</dbReference>
<dbReference type="SMR" id="B5FPR2"/>
<dbReference type="GeneID" id="66758327"/>
<dbReference type="KEGG" id="sed:SeD_A4460"/>
<dbReference type="HOGENOM" id="CLU_020655_0_1_6"/>
<dbReference type="UniPathway" id="UPA00109">
    <property type="reaction ID" value="UER00182"/>
</dbReference>
<dbReference type="Proteomes" id="UP000008322">
    <property type="component" value="Chromosome"/>
</dbReference>
<dbReference type="GO" id="GO:0005945">
    <property type="term" value="C:6-phosphofructokinase complex"/>
    <property type="evidence" value="ECO:0007669"/>
    <property type="project" value="TreeGrafter"/>
</dbReference>
<dbReference type="GO" id="GO:0003872">
    <property type="term" value="F:6-phosphofructokinase activity"/>
    <property type="evidence" value="ECO:0007669"/>
    <property type="project" value="UniProtKB-UniRule"/>
</dbReference>
<dbReference type="GO" id="GO:0016208">
    <property type="term" value="F:AMP binding"/>
    <property type="evidence" value="ECO:0007669"/>
    <property type="project" value="TreeGrafter"/>
</dbReference>
<dbReference type="GO" id="GO:0005524">
    <property type="term" value="F:ATP binding"/>
    <property type="evidence" value="ECO:0007669"/>
    <property type="project" value="UniProtKB-KW"/>
</dbReference>
<dbReference type="GO" id="GO:0070095">
    <property type="term" value="F:fructose-6-phosphate binding"/>
    <property type="evidence" value="ECO:0007669"/>
    <property type="project" value="TreeGrafter"/>
</dbReference>
<dbReference type="GO" id="GO:0042802">
    <property type="term" value="F:identical protein binding"/>
    <property type="evidence" value="ECO:0007669"/>
    <property type="project" value="TreeGrafter"/>
</dbReference>
<dbReference type="GO" id="GO:0046872">
    <property type="term" value="F:metal ion binding"/>
    <property type="evidence" value="ECO:0007669"/>
    <property type="project" value="UniProtKB-KW"/>
</dbReference>
<dbReference type="GO" id="GO:0048029">
    <property type="term" value="F:monosaccharide binding"/>
    <property type="evidence" value="ECO:0007669"/>
    <property type="project" value="TreeGrafter"/>
</dbReference>
<dbReference type="GO" id="GO:0061621">
    <property type="term" value="P:canonical glycolysis"/>
    <property type="evidence" value="ECO:0007669"/>
    <property type="project" value="TreeGrafter"/>
</dbReference>
<dbReference type="GO" id="GO:0030388">
    <property type="term" value="P:fructose 1,6-bisphosphate metabolic process"/>
    <property type="evidence" value="ECO:0007669"/>
    <property type="project" value="TreeGrafter"/>
</dbReference>
<dbReference type="GO" id="GO:0006002">
    <property type="term" value="P:fructose 6-phosphate metabolic process"/>
    <property type="evidence" value="ECO:0007669"/>
    <property type="project" value="InterPro"/>
</dbReference>
<dbReference type="CDD" id="cd00763">
    <property type="entry name" value="Bacterial_PFK"/>
    <property type="match status" value="1"/>
</dbReference>
<dbReference type="FunFam" id="3.40.50.450:FF:000001">
    <property type="entry name" value="ATP-dependent 6-phosphofructokinase"/>
    <property type="match status" value="1"/>
</dbReference>
<dbReference type="FunFam" id="3.40.50.460:FF:000002">
    <property type="entry name" value="ATP-dependent 6-phosphofructokinase"/>
    <property type="match status" value="1"/>
</dbReference>
<dbReference type="Gene3D" id="3.40.50.450">
    <property type="match status" value="1"/>
</dbReference>
<dbReference type="Gene3D" id="3.40.50.460">
    <property type="entry name" value="Phosphofructokinase domain"/>
    <property type="match status" value="1"/>
</dbReference>
<dbReference type="HAMAP" id="MF_00339">
    <property type="entry name" value="Phosphofructokinase_I_B1"/>
    <property type="match status" value="1"/>
</dbReference>
<dbReference type="InterPro" id="IPR022953">
    <property type="entry name" value="ATP_PFK"/>
</dbReference>
<dbReference type="InterPro" id="IPR012003">
    <property type="entry name" value="ATP_PFK_prok-type"/>
</dbReference>
<dbReference type="InterPro" id="IPR012828">
    <property type="entry name" value="PFKA_ATP_prok"/>
</dbReference>
<dbReference type="InterPro" id="IPR015912">
    <property type="entry name" value="Phosphofructokinase_CS"/>
</dbReference>
<dbReference type="InterPro" id="IPR000023">
    <property type="entry name" value="Phosphofructokinase_dom"/>
</dbReference>
<dbReference type="InterPro" id="IPR035966">
    <property type="entry name" value="PKF_sf"/>
</dbReference>
<dbReference type="NCBIfam" id="TIGR02482">
    <property type="entry name" value="PFKA_ATP"/>
    <property type="match status" value="1"/>
</dbReference>
<dbReference type="NCBIfam" id="NF002872">
    <property type="entry name" value="PRK03202.1"/>
    <property type="match status" value="1"/>
</dbReference>
<dbReference type="PANTHER" id="PTHR13697:SF4">
    <property type="entry name" value="ATP-DEPENDENT 6-PHOSPHOFRUCTOKINASE"/>
    <property type="match status" value="1"/>
</dbReference>
<dbReference type="PANTHER" id="PTHR13697">
    <property type="entry name" value="PHOSPHOFRUCTOKINASE"/>
    <property type="match status" value="1"/>
</dbReference>
<dbReference type="Pfam" id="PF00365">
    <property type="entry name" value="PFK"/>
    <property type="match status" value="1"/>
</dbReference>
<dbReference type="PIRSF" id="PIRSF000532">
    <property type="entry name" value="ATP_PFK_prok"/>
    <property type="match status" value="1"/>
</dbReference>
<dbReference type="PRINTS" id="PR00476">
    <property type="entry name" value="PHFRCTKINASE"/>
</dbReference>
<dbReference type="SUPFAM" id="SSF53784">
    <property type="entry name" value="Phosphofructokinase"/>
    <property type="match status" value="1"/>
</dbReference>
<dbReference type="PROSITE" id="PS00433">
    <property type="entry name" value="PHOSPHOFRUCTOKINASE"/>
    <property type="match status" value="1"/>
</dbReference>
<organism>
    <name type="scientific">Salmonella dublin (strain CT_02021853)</name>
    <dbReference type="NCBI Taxonomy" id="439851"/>
    <lineage>
        <taxon>Bacteria</taxon>
        <taxon>Pseudomonadati</taxon>
        <taxon>Pseudomonadota</taxon>
        <taxon>Gammaproteobacteria</taxon>
        <taxon>Enterobacterales</taxon>
        <taxon>Enterobacteriaceae</taxon>
        <taxon>Salmonella</taxon>
    </lineage>
</organism>
<accession>B5FPR2</accession>
<evidence type="ECO:0000255" key="1">
    <source>
        <dbReference type="HAMAP-Rule" id="MF_00339"/>
    </source>
</evidence>
<gene>
    <name evidence="1" type="primary">pfkA</name>
    <name type="ordered locus">SeD_A4460</name>
</gene>
<reference key="1">
    <citation type="journal article" date="2011" name="J. Bacteriol.">
        <title>Comparative genomics of 28 Salmonella enterica isolates: evidence for CRISPR-mediated adaptive sublineage evolution.</title>
        <authorList>
            <person name="Fricke W.F."/>
            <person name="Mammel M.K."/>
            <person name="McDermott P.F."/>
            <person name="Tartera C."/>
            <person name="White D.G."/>
            <person name="Leclerc J.E."/>
            <person name="Ravel J."/>
            <person name="Cebula T.A."/>
        </authorList>
    </citation>
    <scope>NUCLEOTIDE SEQUENCE [LARGE SCALE GENOMIC DNA]</scope>
    <source>
        <strain>CT_02021853</strain>
    </source>
</reference>
<protein>
    <recommendedName>
        <fullName evidence="1">ATP-dependent 6-phosphofructokinase</fullName>
        <shortName evidence="1">ATP-PFK</shortName>
        <shortName evidence="1">Phosphofructokinase</shortName>
        <ecNumber evidence="1">2.7.1.11</ecNumber>
    </recommendedName>
    <alternativeName>
        <fullName evidence="1">Phosphohexokinase</fullName>
    </alternativeName>
</protein>